<feature type="chain" id="PRO_1000190889" description="UDP-3-O-acylglucosamine N-acyltransferase">
    <location>
        <begin position="1"/>
        <end position="354"/>
    </location>
</feature>
<feature type="active site" description="Proton acceptor" evidence="1">
    <location>
        <position position="245"/>
    </location>
</feature>
<dbReference type="EC" id="2.3.1.191" evidence="1"/>
<dbReference type="EMBL" id="CP001359">
    <property type="protein sequence ID" value="ACL64555.1"/>
    <property type="molecule type" value="Genomic_DNA"/>
</dbReference>
<dbReference type="RefSeq" id="WP_012632542.1">
    <property type="nucleotide sequence ID" value="NC_011891.1"/>
</dbReference>
<dbReference type="SMR" id="B8JFW7"/>
<dbReference type="KEGG" id="acp:A2cp1_1211"/>
<dbReference type="HOGENOM" id="CLU_049865_0_0_7"/>
<dbReference type="UniPathway" id="UPA00973"/>
<dbReference type="Proteomes" id="UP000007089">
    <property type="component" value="Chromosome"/>
</dbReference>
<dbReference type="GO" id="GO:0016020">
    <property type="term" value="C:membrane"/>
    <property type="evidence" value="ECO:0007669"/>
    <property type="project" value="GOC"/>
</dbReference>
<dbReference type="GO" id="GO:0016410">
    <property type="term" value="F:N-acyltransferase activity"/>
    <property type="evidence" value="ECO:0007669"/>
    <property type="project" value="InterPro"/>
</dbReference>
<dbReference type="GO" id="GO:0009245">
    <property type="term" value="P:lipid A biosynthetic process"/>
    <property type="evidence" value="ECO:0007669"/>
    <property type="project" value="UniProtKB-UniRule"/>
</dbReference>
<dbReference type="CDD" id="cd03352">
    <property type="entry name" value="LbH_LpxD"/>
    <property type="match status" value="1"/>
</dbReference>
<dbReference type="Gene3D" id="2.160.10.10">
    <property type="entry name" value="Hexapeptide repeat proteins"/>
    <property type="match status" value="1"/>
</dbReference>
<dbReference type="Gene3D" id="3.40.1390.10">
    <property type="entry name" value="MurE/MurF, N-terminal domain"/>
    <property type="match status" value="1"/>
</dbReference>
<dbReference type="HAMAP" id="MF_00523">
    <property type="entry name" value="LpxD"/>
    <property type="match status" value="1"/>
</dbReference>
<dbReference type="InterPro" id="IPR001451">
    <property type="entry name" value="Hexapep"/>
</dbReference>
<dbReference type="InterPro" id="IPR007691">
    <property type="entry name" value="LpxD"/>
</dbReference>
<dbReference type="InterPro" id="IPR011004">
    <property type="entry name" value="Trimer_LpxA-like_sf"/>
</dbReference>
<dbReference type="InterPro" id="IPR020573">
    <property type="entry name" value="UDP_GlcNAc_AcTrfase_non-rep"/>
</dbReference>
<dbReference type="NCBIfam" id="TIGR01853">
    <property type="entry name" value="lipid_A_lpxD"/>
    <property type="match status" value="1"/>
</dbReference>
<dbReference type="NCBIfam" id="NF002060">
    <property type="entry name" value="PRK00892.1"/>
    <property type="match status" value="1"/>
</dbReference>
<dbReference type="PANTHER" id="PTHR43378">
    <property type="entry name" value="UDP-3-O-ACYLGLUCOSAMINE N-ACYLTRANSFERASE"/>
    <property type="match status" value="1"/>
</dbReference>
<dbReference type="PANTHER" id="PTHR43378:SF2">
    <property type="entry name" value="UDP-3-O-ACYLGLUCOSAMINE N-ACYLTRANSFERASE 1, MITOCHONDRIAL-RELATED"/>
    <property type="match status" value="1"/>
</dbReference>
<dbReference type="Pfam" id="PF00132">
    <property type="entry name" value="Hexapep"/>
    <property type="match status" value="1"/>
</dbReference>
<dbReference type="Pfam" id="PF04613">
    <property type="entry name" value="LpxD"/>
    <property type="match status" value="1"/>
</dbReference>
<dbReference type="SUPFAM" id="SSF51161">
    <property type="entry name" value="Trimeric LpxA-like enzymes"/>
    <property type="match status" value="1"/>
</dbReference>
<dbReference type="PROSITE" id="PS00101">
    <property type="entry name" value="HEXAPEP_TRANSFERASES"/>
    <property type="match status" value="1"/>
</dbReference>
<evidence type="ECO:0000255" key="1">
    <source>
        <dbReference type="HAMAP-Rule" id="MF_00523"/>
    </source>
</evidence>
<gene>
    <name evidence="1" type="primary">lpxD</name>
    <name type="ordered locus">A2cp1_1211</name>
</gene>
<accession>B8JFW7</accession>
<proteinExistence type="inferred from homology"/>
<comment type="function">
    <text evidence="1">Catalyzes the N-acylation of UDP-3-O-acylglucosamine using 3-hydroxyacyl-ACP as the acyl donor. Is involved in the biosynthesis of lipid A, a phosphorylated glycolipid that anchors the lipopolysaccharide to the outer membrane of the cell.</text>
</comment>
<comment type="catalytic activity">
    <reaction evidence="1">
        <text>a UDP-3-O-[(3R)-3-hydroxyacyl]-alpha-D-glucosamine + a (3R)-hydroxyacyl-[ACP] = a UDP-2-N,3-O-bis[(3R)-3-hydroxyacyl]-alpha-D-glucosamine + holo-[ACP] + H(+)</text>
        <dbReference type="Rhea" id="RHEA:53836"/>
        <dbReference type="Rhea" id="RHEA-COMP:9685"/>
        <dbReference type="Rhea" id="RHEA-COMP:9945"/>
        <dbReference type="ChEBI" id="CHEBI:15378"/>
        <dbReference type="ChEBI" id="CHEBI:64479"/>
        <dbReference type="ChEBI" id="CHEBI:78827"/>
        <dbReference type="ChEBI" id="CHEBI:137740"/>
        <dbReference type="ChEBI" id="CHEBI:137748"/>
        <dbReference type="EC" id="2.3.1.191"/>
    </reaction>
</comment>
<comment type="pathway">
    <text evidence="1">Bacterial outer membrane biogenesis; LPS lipid A biosynthesis.</text>
</comment>
<comment type="subunit">
    <text evidence="1">Homotrimer.</text>
</comment>
<comment type="similarity">
    <text evidence="1">Belongs to the transferase hexapeptide repeat family. LpxD subfamily.</text>
</comment>
<name>LPXD_ANAD2</name>
<organism>
    <name type="scientific">Anaeromyxobacter dehalogenans (strain 2CP-1 / ATCC BAA-258)</name>
    <dbReference type="NCBI Taxonomy" id="455488"/>
    <lineage>
        <taxon>Bacteria</taxon>
        <taxon>Pseudomonadati</taxon>
        <taxon>Myxococcota</taxon>
        <taxon>Myxococcia</taxon>
        <taxon>Myxococcales</taxon>
        <taxon>Cystobacterineae</taxon>
        <taxon>Anaeromyxobacteraceae</taxon>
        <taxon>Anaeromyxobacter</taxon>
    </lineage>
</organism>
<keyword id="KW-0012">Acyltransferase</keyword>
<keyword id="KW-0441">Lipid A biosynthesis</keyword>
<keyword id="KW-0444">Lipid biosynthesis</keyword>
<keyword id="KW-0443">Lipid metabolism</keyword>
<keyword id="KW-0677">Repeat</keyword>
<keyword id="KW-0808">Transferase</keyword>
<protein>
    <recommendedName>
        <fullName evidence="1">UDP-3-O-acylglucosamine N-acyltransferase</fullName>
        <ecNumber evidence="1">2.3.1.191</ecNumber>
    </recommendedName>
</protein>
<sequence length="354" mass="37036">MASYTLAELAARVGGAVEGDGSLRLDGISPLEEASASEISFFSNRKYRKAFEASRAGAVVVEPDEQVAAGRTVLRVANAYLAFAKISTLFHPPREAVPEVAPTAVIHPTARVHPSAQVMPLACVGPDAQVGARTILFPGVHVADGARVGEDCVFYHNVVVRERCAVGNRVILQPGCVIGSDGFGFAFDPEGEGKGPRHYKVPQVGNVVIEDDVEVGANTCVDRATLGTTRIGRGAKIDNLVQIAHNVQVGPLSLLVSQVGVAGSTKLGMGVVAGGQAGIVGHLEIGDGVRIGAQSGVMADVEAGETVSGSPAVPHGNWLKAMASLDHLHDMRKELRSLRREVERLRADAGEDEP</sequence>
<reference key="1">
    <citation type="submission" date="2009-01" db="EMBL/GenBank/DDBJ databases">
        <title>Complete sequence of Anaeromyxobacter dehalogenans 2CP-1.</title>
        <authorList>
            <person name="Lucas S."/>
            <person name="Copeland A."/>
            <person name="Lapidus A."/>
            <person name="Glavina del Rio T."/>
            <person name="Dalin E."/>
            <person name="Tice H."/>
            <person name="Bruce D."/>
            <person name="Goodwin L."/>
            <person name="Pitluck S."/>
            <person name="Saunders E."/>
            <person name="Brettin T."/>
            <person name="Detter J.C."/>
            <person name="Han C."/>
            <person name="Larimer F."/>
            <person name="Land M."/>
            <person name="Hauser L."/>
            <person name="Kyrpides N."/>
            <person name="Ovchinnikova G."/>
            <person name="Beliaev A.S."/>
            <person name="Richardson P."/>
        </authorList>
    </citation>
    <scope>NUCLEOTIDE SEQUENCE [LARGE SCALE GENOMIC DNA]</scope>
    <source>
        <strain>2CP-1 / ATCC BAA-258</strain>
    </source>
</reference>